<name>CATA_CANAL</name>
<proteinExistence type="evidence at transcript level"/>
<organism>
    <name type="scientific">Candida albicans (strain SC5314 / ATCC MYA-2876)</name>
    <name type="common">Yeast</name>
    <dbReference type="NCBI Taxonomy" id="237561"/>
    <lineage>
        <taxon>Eukaryota</taxon>
        <taxon>Fungi</taxon>
        <taxon>Dikarya</taxon>
        <taxon>Ascomycota</taxon>
        <taxon>Saccharomycotina</taxon>
        <taxon>Pichiomycetes</taxon>
        <taxon>Debaryomycetaceae</taxon>
        <taxon>Candida/Lodderomyces clade</taxon>
        <taxon>Candida</taxon>
    </lineage>
</organism>
<keyword id="KW-0349">Heme</keyword>
<keyword id="KW-0376">Hydrogen peroxide</keyword>
<keyword id="KW-0408">Iron</keyword>
<keyword id="KW-0479">Metal-binding</keyword>
<keyword id="KW-0560">Oxidoreductase</keyword>
<keyword id="KW-0575">Peroxidase</keyword>
<keyword id="KW-0576">Peroxisome</keyword>
<keyword id="KW-1185">Reference proteome</keyword>
<reference key="1">
    <citation type="journal article" date="1998" name="Infect. Immun.">
        <title>Cloning and sequencing of a Candida albicans catalase gene and effects of disruption of this gene.</title>
        <authorList>
            <person name="Wysong D.R."/>
            <person name="Christin L."/>
            <person name="Sugar A.M."/>
            <person name="Robbins P.W."/>
            <person name="Diamond R.D."/>
        </authorList>
    </citation>
    <scope>NUCLEOTIDE SEQUENCE [GENOMIC DNA]</scope>
    <source>
        <strain>ATCC 10261 / CBS 2718 / NBRC 1061</strain>
    </source>
</reference>
<reference key="2">
    <citation type="journal article" date="2008" name="Microbiol. Immunol.">
        <title>Catalase gene disruptant of the human pathogenic yeast Candida albicans is defective in hyphal growth, and a catalase-specific inhibitor can suppress hyphal growth of wild-type cells.</title>
        <authorList>
            <person name="Nakagawa Y."/>
        </authorList>
    </citation>
    <scope>NUCLEOTIDE SEQUENCE [GENOMIC DNA / MRNA]</scope>
    <scope>FUNCTION</scope>
    <source>
        <strain>FC18</strain>
    </source>
</reference>
<reference key="3">
    <citation type="journal article" date="2004" name="Proc. Natl. Acad. Sci. U.S.A.">
        <title>The diploid genome sequence of Candida albicans.</title>
        <authorList>
            <person name="Jones T."/>
            <person name="Federspiel N.A."/>
            <person name="Chibana H."/>
            <person name="Dungan J."/>
            <person name="Kalman S."/>
            <person name="Magee B.B."/>
            <person name="Newport G."/>
            <person name="Thorstenson Y.R."/>
            <person name="Agabian N."/>
            <person name="Magee P.T."/>
            <person name="Davis R.W."/>
            <person name="Scherer S."/>
        </authorList>
    </citation>
    <scope>NUCLEOTIDE SEQUENCE [LARGE SCALE GENOMIC DNA]</scope>
    <source>
        <strain>SC5314 / ATCC MYA-2876</strain>
    </source>
</reference>
<reference key="4">
    <citation type="journal article" date="2007" name="Genome Biol.">
        <title>Assembly of the Candida albicans genome into sixteen supercontigs aligned on the eight chromosomes.</title>
        <authorList>
            <person name="van het Hoog M."/>
            <person name="Rast T.J."/>
            <person name="Martchenko M."/>
            <person name="Grindle S."/>
            <person name="Dignard D."/>
            <person name="Hogues H."/>
            <person name="Cuomo C."/>
            <person name="Berriman M."/>
            <person name="Scherer S."/>
            <person name="Magee B.B."/>
            <person name="Whiteway M."/>
            <person name="Chibana H."/>
            <person name="Nantel A."/>
            <person name="Magee P.T."/>
        </authorList>
    </citation>
    <scope>GENOME REANNOTATION</scope>
    <source>
        <strain>SC5314 / ATCC MYA-2876</strain>
    </source>
</reference>
<reference key="5">
    <citation type="journal article" date="2013" name="Genome Biol.">
        <title>Assembly of a phased diploid Candida albicans genome facilitates allele-specific measurements and provides a simple model for repeat and indel structure.</title>
        <authorList>
            <person name="Muzzey D."/>
            <person name="Schwartz K."/>
            <person name="Weissman J.S."/>
            <person name="Sherlock G."/>
        </authorList>
    </citation>
    <scope>NUCLEOTIDE SEQUENCE [LARGE SCALE GENOMIC DNA]</scope>
    <scope>GENOME REANNOTATION</scope>
    <source>
        <strain>SC5314 / ATCC MYA-2876</strain>
    </source>
</reference>
<feature type="initiator methionine" description="Removed" evidence="1">
    <location>
        <position position="1"/>
    </location>
</feature>
<feature type="chain" id="PRO_0000084918" description="Peroxisomal catalase">
    <location>
        <begin position="2"/>
        <end position="485"/>
    </location>
</feature>
<feature type="active site" evidence="4">
    <location>
        <position position="53"/>
    </location>
</feature>
<feature type="active site" evidence="4">
    <location>
        <position position="126"/>
    </location>
</feature>
<feature type="binding site" description="axial binding residue" evidence="2">
    <location>
        <position position="336"/>
    </location>
    <ligand>
        <name>heme</name>
        <dbReference type="ChEBI" id="CHEBI:30413"/>
    </ligand>
    <ligandPart>
        <name>Fe</name>
        <dbReference type="ChEBI" id="CHEBI:18248"/>
    </ligandPart>
</feature>
<feature type="sequence conflict" description="In Ref. 1; AAC39448." evidence="6" ref="1">
    <original>F</original>
    <variation>I</variation>
    <location>
        <position position="114"/>
    </location>
</feature>
<feature type="sequence conflict" description="In Ref. 1; AAC39448." evidence="6" ref="1">
    <original>T</original>
    <variation>N</variation>
    <location>
        <position position="224"/>
    </location>
</feature>
<feature type="sequence conflict" description="In Ref. 1; AAC39448." evidence="6" ref="1">
    <original>K</original>
    <variation>R</variation>
    <location>
        <position position="284"/>
    </location>
</feature>
<feature type="sequence conflict" description="In Ref. 1; AAC39448." evidence="6" ref="1">
    <original>L</original>
    <variation>M</variation>
    <location>
        <position position="288"/>
    </location>
</feature>
<feature type="sequence conflict" description="In Ref. 1; AAC39448." evidence="6" ref="1">
    <original>K</original>
    <variation>E</variation>
    <location>
        <position position="301"/>
    </location>
</feature>
<feature type="sequence conflict" description="In Ref. 1; AAC39448." evidence="6" ref="1">
    <original>R</original>
    <variation>RP</variation>
    <location>
        <position position="341"/>
    </location>
</feature>
<feature type="sequence conflict" description="In Ref. 1; AAC39448." evidence="6" ref="1">
    <original>M</original>
    <variation>S</variation>
    <location>
        <position position="366"/>
    </location>
</feature>
<feature type="sequence conflict" description="In Ref. 1; AAC39448." evidence="6" ref="1">
    <original>L</original>
    <variation>SF</variation>
    <location>
        <position position="397"/>
    </location>
</feature>
<comment type="function">
    <text evidence="5">Catalyzes the degradation of hydrogen peroxide (H(2)O(2)) generated by peroxisomal oxidases to water and oxygen, thereby protecting cells from the toxic effects of hydrogen peroxide.</text>
</comment>
<comment type="catalytic activity">
    <reaction evidence="4">
        <text>2 H2O2 = O2 + 2 H2O</text>
        <dbReference type="Rhea" id="RHEA:20309"/>
        <dbReference type="ChEBI" id="CHEBI:15377"/>
        <dbReference type="ChEBI" id="CHEBI:15379"/>
        <dbReference type="ChEBI" id="CHEBI:16240"/>
        <dbReference type="EC" id="1.11.1.6"/>
    </reaction>
</comment>
<comment type="cofactor">
    <cofactor evidence="3">
        <name>heme</name>
        <dbReference type="ChEBI" id="CHEBI:30413"/>
    </cofactor>
</comment>
<comment type="subunit">
    <text evidence="1">Homotetramer.</text>
</comment>
<comment type="subcellular location">
    <subcellularLocation>
        <location evidence="3">Peroxisome matrix</location>
    </subcellularLocation>
</comment>
<comment type="similarity">
    <text evidence="6">Belongs to the catalase family.</text>
</comment>
<protein>
    <recommendedName>
        <fullName>Peroxisomal catalase</fullName>
        <ecNumber evidence="4">1.11.1.6</ecNumber>
    </recommendedName>
</protein>
<gene>
    <name type="primary">CAT1</name>
    <name type="synonym">CTA1</name>
    <name type="ordered locus">CAALFM_C106810WA</name>
    <name type="ORF">CaO19.13609</name>
    <name type="ORF">CaO19.6229</name>
</gene>
<sequence>MAPTFTNSNGQPIPEPFATQRVGQHGPLLLQDFNLIDSLAHFDRERIPERVVHAKGSGAYGVFEVTDDITDICAAKFLDTVGKKTRIFTRFSTVGGELGSADTARDPRGFATKFYTEEGNLDLVYNNTPVFFIRDPSKFPHFIHTQKRNPETHLKDANMFWDYLTSNEESIHQVMVLFSDRGTPASYREMNGYSGHTYKWSNKKGEWFYVQVHFISDQGIKTLTNEEAGALAGSNPDYAQEDLFKNIAAGNYPSWTAYIQTMTEAEAKEAEFSVFDLTKVWPHKKYPLRRFGKFTLNENPKNYFAEVEQAAFSPAHTVPYMEPSADPVLQSRLFSYADTHRHRLGTNYTQIPVNCPVTGAVFNPHMRDGAMTVNGNLGSHPNYLASDKPVEFKQFSLQEDQEVWNGAATPFHWKATPADFKQAQELWKVLKRYPNQQEHLAHNIAVHAAGADAAIQDRVFAYFGKVSQDLADAIKKEVLELSPRK</sequence>
<dbReference type="EC" id="1.11.1.6" evidence="4"/>
<dbReference type="EMBL" id="U40704">
    <property type="protein sequence ID" value="AAC39448.1"/>
    <property type="molecule type" value="Genomic_DNA"/>
</dbReference>
<dbReference type="EMBL" id="AB006327">
    <property type="protein sequence ID" value="BAA21767.1"/>
    <property type="molecule type" value="mRNA"/>
</dbReference>
<dbReference type="EMBL" id="AB006328">
    <property type="protein sequence ID" value="BAA21768.1"/>
    <property type="molecule type" value="Genomic_DNA"/>
</dbReference>
<dbReference type="EMBL" id="CP017623">
    <property type="protein sequence ID" value="AOW26336.1"/>
    <property type="molecule type" value="Genomic_DNA"/>
</dbReference>
<dbReference type="RefSeq" id="XP_718818.1">
    <property type="nucleotide sequence ID" value="XM_713725.2"/>
</dbReference>
<dbReference type="SMR" id="O13289"/>
<dbReference type="BioGRID" id="1222589">
    <property type="interactions" value="1"/>
</dbReference>
<dbReference type="FunCoup" id="O13289">
    <property type="interactions" value="1041"/>
</dbReference>
<dbReference type="STRING" id="237561.O13289"/>
<dbReference type="MoonDB" id="O13289">
    <property type="type" value="Curated"/>
</dbReference>
<dbReference type="MoonProt" id="O13289"/>
<dbReference type="PeroxiBase" id="5253">
    <property type="entry name" value="CalKat01"/>
</dbReference>
<dbReference type="EnsemblFungi" id="C1_06810W_A-T">
    <property type="protein sequence ID" value="C1_06810W_A-T-p1"/>
    <property type="gene ID" value="C1_06810W_A"/>
</dbReference>
<dbReference type="GeneID" id="3639495"/>
<dbReference type="KEGG" id="cal:CAALFM_C106810WA"/>
<dbReference type="CGD" id="CAL0000188148">
    <property type="gene designation" value="CAT1"/>
</dbReference>
<dbReference type="VEuPathDB" id="FungiDB:C1_06810W_A"/>
<dbReference type="eggNOG" id="KOG0047">
    <property type="taxonomic scope" value="Eukaryota"/>
</dbReference>
<dbReference type="HOGENOM" id="CLU_010645_2_0_1"/>
<dbReference type="InParanoid" id="O13289"/>
<dbReference type="OMA" id="KFRWNVF"/>
<dbReference type="OrthoDB" id="6880011at2759"/>
<dbReference type="PHI-base" id="PHI:106"/>
<dbReference type="PHI-base" id="PHI:7209"/>
<dbReference type="PRO" id="PR:O13289"/>
<dbReference type="Proteomes" id="UP000000559">
    <property type="component" value="Chromosome 1"/>
</dbReference>
<dbReference type="GO" id="GO:0005737">
    <property type="term" value="C:cytoplasm"/>
    <property type="evidence" value="ECO:0000318"/>
    <property type="project" value="GO_Central"/>
</dbReference>
<dbReference type="GO" id="GO:0009277">
    <property type="term" value="C:fungal-type cell wall"/>
    <property type="evidence" value="ECO:0000314"/>
    <property type="project" value="CAFA"/>
</dbReference>
<dbReference type="GO" id="GO:0005759">
    <property type="term" value="C:mitochondrial matrix"/>
    <property type="evidence" value="ECO:0007669"/>
    <property type="project" value="EnsemblFungi"/>
</dbReference>
<dbReference type="GO" id="GO:0005739">
    <property type="term" value="C:mitochondrion"/>
    <property type="evidence" value="ECO:0000318"/>
    <property type="project" value="GO_Central"/>
</dbReference>
<dbReference type="GO" id="GO:0005782">
    <property type="term" value="C:peroxisomal matrix"/>
    <property type="evidence" value="ECO:0007669"/>
    <property type="project" value="UniProtKB-SubCell"/>
</dbReference>
<dbReference type="GO" id="GO:0005777">
    <property type="term" value="C:peroxisome"/>
    <property type="evidence" value="ECO:0000318"/>
    <property type="project" value="GO_Central"/>
</dbReference>
<dbReference type="GO" id="GO:0004096">
    <property type="term" value="F:catalase activity"/>
    <property type="evidence" value="ECO:0000314"/>
    <property type="project" value="CGD"/>
</dbReference>
<dbReference type="GO" id="GO:0020037">
    <property type="term" value="F:heme binding"/>
    <property type="evidence" value="ECO:0000318"/>
    <property type="project" value="GO_Central"/>
</dbReference>
<dbReference type="GO" id="GO:0046872">
    <property type="term" value="F:metal ion binding"/>
    <property type="evidence" value="ECO:0007669"/>
    <property type="project" value="UniProtKB-KW"/>
</dbReference>
<dbReference type="GO" id="GO:0051701">
    <property type="term" value="P:biological process involved in interaction with host"/>
    <property type="evidence" value="ECO:0000314"/>
    <property type="project" value="CAFA"/>
</dbReference>
<dbReference type="GO" id="GO:0070301">
    <property type="term" value="P:cellular response to hydrogen peroxide"/>
    <property type="evidence" value="ECO:0000315"/>
    <property type="project" value="CGD"/>
</dbReference>
<dbReference type="GO" id="GO:0009267">
    <property type="term" value="P:cellular response to starvation"/>
    <property type="evidence" value="ECO:0000315"/>
    <property type="project" value="CGD"/>
</dbReference>
<dbReference type="GO" id="GO:0030447">
    <property type="term" value="P:filamentous growth"/>
    <property type="evidence" value="ECO:0000315"/>
    <property type="project" value="CGD"/>
</dbReference>
<dbReference type="GO" id="GO:0036171">
    <property type="term" value="P:filamentous growth of a population of unicellular organisms in response to chemical stimulus"/>
    <property type="evidence" value="ECO:0000315"/>
    <property type="project" value="CGD"/>
</dbReference>
<dbReference type="GO" id="GO:0036170">
    <property type="term" value="P:filamentous growth of a population of unicellular organisms in response to starvation"/>
    <property type="evidence" value="ECO:0000315"/>
    <property type="project" value="CGD"/>
</dbReference>
<dbReference type="GO" id="GO:0042744">
    <property type="term" value="P:hydrogen peroxide catabolic process"/>
    <property type="evidence" value="ECO:0000315"/>
    <property type="project" value="CGD"/>
</dbReference>
<dbReference type="GO" id="GO:0042743">
    <property type="term" value="P:hydrogen peroxide metabolic process"/>
    <property type="evidence" value="ECO:0000250"/>
    <property type="project" value="CGD"/>
</dbReference>
<dbReference type="GO" id="GO:0042542">
    <property type="term" value="P:response to hydrogen peroxide"/>
    <property type="evidence" value="ECO:0000315"/>
    <property type="project" value="CGD"/>
</dbReference>
<dbReference type="CDD" id="cd08157">
    <property type="entry name" value="catalase_fungal"/>
    <property type="match status" value="1"/>
</dbReference>
<dbReference type="FunFam" id="2.40.180.10:FF:000001">
    <property type="entry name" value="Catalase"/>
    <property type="match status" value="1"/>
</dbReference>
<dbReference type="Gene3D" id="2.40.180.10">
    <property type="entry name" value="Catalase core domain"/>
    <property type="match status" value="1"/>
</dbReference>
<dbReference type="InterPro" id="IPR018028">
    <property type="entry name" value="Catalase"/>
</dbReference>
<dbReference type="InterPro" id="IPR024708">
    <property type="entry name" value="Catalase_AS"/>
</dbReference>
<dbReference type="InterPro" id="IPR024711">
    <property type="entry name" value="Catalase_clade1/3"/>
</dbReference>
<dbReference type="InterPro" id="IPR011614">
    <property type="entry name" value="Catalase_core"/>
</dbReference>
<dbReference type="InterPro" id="IPR002226">
    <property type="entry name" value="Catalase_haem_BS"/>
</dbReference>
<dbReference type="InterPro" id="IPR010582">
    <property type="entry name" value="Catalase_immune_responsive"/>
</dbReference>
<dbReference type="InterPro" id="IPR020835">
    <property type="entry name" value="Catalase_sf"/>
</dbReference>
<dbReference type="PANTHER" id="PTHR11465">
    <property type="entry name" value="CATALASE"/>
    <property type="match status" value="1"/>
</dbReference>
<dbReference type="PANTHER" id="PTHR11465:SF9">
    <property type="entry name" value="CATALASE"/>
    <property type="match status" value="1"/>
</dbReference>
<dbReference type="Pfam" id="PF00199">
    <property type="entry name" value="Catalase"/>
    <property type="match status" value="1"/>
</dbReference>
<dbReference type="Pfam" id="PF06628">
    <property type="entry name" value="Catalase-rel"/>
    <property type="match status" value="1"/>
</dbReference>
<dbReference type="PIRSF" id="PIRSF038928">
    <property type="entry name" value="Catalase_clade1-3"/>
    <property type="match status" value="1"/>
</dbReference>
<dbReference type="PRINTS" id="PR00067">
    <property type="entry name" value="CATALASE"/>
</dbReference>
<dbReference type="SMART" id="SM01060">
    <property type="entry name" value="Catalase"/>
    <property type="match status" value="1"/>
</dbReference>
<dbReference type="SUPFAM" id="SSF56634">
    <property type="entry name" value="Heme-dependent catalase-like"/>
    <property type="match status" value="1"/>
</dbReference>
<dbReference type="PROSITE" id="PS00437">
    <property type="entry name" value="CATALASE_1"/>
    <property type="match status" value="1"/>
</dbReference>
<dbReference type="PROSITE" id="PS00438">
    <property type="entry name" value="CATALASE_2"/>
    <property type="match status" value="1"/>
</dbReference>
<dbReference type="PROSITE" id="PS51402">
    <property type="entry name" value="CATALASE_3"/>
    <property type="match status" value="1"/>
</dbReference>
<evidence type="ECO:0000250" key="1"/>
<evidence type="ECO:0000250" key="2">
    <source>
        <dbReference type="UniProtKB" id="P04040"/>
    </source>
</evidence>
<evidence type="ECO:0000250" key="3">
    <source>
        <dbReference type="UniProtKB" id="P15202"/>
    </source>
</evidence>
<evidence type="ECO:0000255" key="4">
    <source>
        <dbReference type="PROSITE-ProRule" id="PRU10013"/>
    </source>
</evidence>
<evidence type="ECO:0000269" key="5">
    <source>
    </source>
</evidence>
<evidence type="ECO:0000305" key="6"/>
<accession>O13289</accession>
<accession>A0A1D8PDX2</accession>
<accession>O42616</accession>
<accession>Q5AAT2</accession>
<accession>Q9URJ7</accession>